<organism>
    <name type="scientific">Bacillus cereus (strain Q1)</name>
    <dbReference type="NCBI Taxonomy" id="361100"/>
    <lineage>
        <taxon>Bacteria</taxon>
        <taxon>Bacillati</taxon>
        <taxon>Bacillota</taxon>
        <taxon>Bacilli</taxon>
        <taxon>Bacillales</taxon>
        <taxon>Bacillaceae</taxon>
        <taxon>Bacillus</taxon>
        <taxon>Bacillus cereus group</taxon>
    </lineage>
</organism>
<proteinExistence type="inferred from homology"/>
<dbReference type="EC" id="4.2.1.19" evidence="1"/>
<dbReference type="EMBL" id="CP000227">
    <property type="protein sequence ID" value="ACM11908.1"/>
    <property type="molecule type" value="Genomic_DNA"/>
</dbReference>
<dbReference type="SMR" id="B9IUZ7"/>
<dbReference type="KEGG" id="bcq:BCQ_1480"/>
<dbReference type="HOGENOM" id="CLU_044308_3_0_9"/>
<dbReference type="UniPathway" id="UPA00031">
    <property type="reaction ID" value="UER00011"/>
</dbReference>
<dbReference type="Proteomes" id="UP000000441">
    <property type="component" value="Chromosome"/>
</dbReference>
<dbReference type="GO" id="GO:0005737">
    <property type="term" value="C:cytoplasm"/>
    <property type="evidence" value="ECO:0007669"/>
    <property type="project" value="UniProtKB-SubCell"/>
</dbReference>
<dbReference type="GO" id="GO:0004424">
    <property type="term" value="F:imidazoleglycerol-phosphate dehydratase activity"/>
    <property type="evidence" value="ECO:0007669"/>
    <property type="project" value="UniProtKB-UniRule"/>
</dbReference>
<dbReference type="GO" id="GO:0000105">
    <property type="term" value="P:L-histidine biosynthetic process"/>
    <property type="evidence" value="ECO:0007669"/>
    <property type="project" value="UniProtKB-UniRule"/>
</dbReference>
<dbReference type="CDD" id="cd07914">
    <property type="entry name" value="IGPD"/>
    <property type="match status" value="1"/>
</dbReference>
<dbReference type="FunFam" id="3.30.230.40:FF:000001">
    <property type="entry name" value="Imidazoleglycerol-phosphate dehydratase HisB"/>
    <property type="match status" value="1"/>
</dbReference>
<dbReference type="FunFam" id="3.30.230.40:FF:000003">
    <property type="entry name" value="Imidazoleglycerol-phosphate dehydratase HisB"/>
    <property type="match status" value="1"/>
</dbReference>
<dbReference type="Gene3D" id="3.30.230.40">
    <property type="entry name" value="Imidazole glycerol phosphate dehydratase, domain 1"/>
    <property type="match status" value="2"/>
</dbReference>
<dbReference type="HAMAP" id="MF_00076">
    <property type="entry name" value="HisB"/>
    <property type="match status" value="1"/>
</dbReference>
<dbReference type="InterPro" id="IPR038494">
    <property type="entry name" value="IGPD_sf"/>
</dbReference>
<dbReference type="InterPro" id="IPR000807">
    <property type="entry name" value="ImidazoleglycerolP_deHydtase"/>
</dbReference>
<dbReference type="InterPro" id="IPR020565">
    <property type="entry name" value="ImidazoleglycerP_deHydtase_CS"/>
</dbReference>
<dbReference type="InterPro" id="IPR020568">
    <property type="entry name" value="Ribosomal_Su5_D2-typ_SF"/>
</dbReference>
<dbReference type="NCBIfam" id="NF002107">
    <property type="entry name" value="PRK00951.1-2"/>
    <property type="match status" value="1"/>
</dbReference>
<dbReference type="NCBIfam" id="NF002111">
    <property type="entry name" value="PRK00951.2-1"/>
    <property type="match status" value="1"/>
</dbReference>
<dbReference type="NCBIfam" id="NF002114">
    <property type="entry name" value="PRK00951.2-4"/>
    <property type="match status" value="1"/>
</dbReference>
<dbReference type="PANTHER" id="PTHR23133:SF2">
    <property type="entry name" value="IMIDAZOLEGLYCEROL-PHOSPHATE DEHYDRATASE"/>
    <property type="match status" value="1"/>
</dbReference>
<dbReference type="PANTHER" id="PTHR23133">
    <property type="entry name" value="IMIDAZOLEGLYCEROL-PHOSPHATE DEHYDRATASE HIS7"/>
    <property type="match status" value="1"/>
</dbReference>
<dbReference type="Pfam" id="PF00475">
    <property type="entry name" value="IGPD"/>
    <property type="match status" value="1"/>
</dbReference>
<dbReference type="SUPFAM" id="SSF54211">
    <property type="entry name" value="Ribosomal protein S5 domain 2-like"/>
    <property type="match status" value="2"/>
</dbReference>
<dbReference type="PROSITE" id="PS00954">
    <property type="entry name" value="IGP_DEHYDRATASE_1"/>
    <property type="match status" value="1"/>
</dbReference>
<dbReference type="PROSITE" id="PS00955">
    <property type="entry name" value="IGP_DEHYDRATASE_2"/>
    <property type="match status" value="1"/>
</dbReference>
<evidence type="ECO:0000255" key="1">
    <source>
        <dbReference type="HAMAP-Rule" id="MF_00076"/>
    </source>
</evidence>
<comment type="catalytic activity">
    <reaction evidence="1">
        <text>D-erythro-1-(imidazol-4-yl)glycerol 3-phosphate = 3-(imidazol-4-yl)-2-oxopropyl phosphate + H2O</text>
        <dbReference type="Rhea" id="RHEA:11040"/>
        <dbReference type="ChEBI" id="CHEBI:15377"/>
        <dbReference type="ChEBI" id="CHEBI:57766"/>
        <dbReference type="ChEBI" id="CHEBI:58278"/>
        <dbReference type="EC" id="4.2.1.19"/>
    </reaction>
</comment>
<comment type="pathway">
    <text evidence="1">Amino-acid biosynthesis; L-histidine biosynthesis; L-histidine from 5-phospho-alpha-D-ribose 1-diphosphate: step 6/9.</text>
</comment>
<comment type="subcellular location">
    <subcellularLocation>
        <location evidence="1">Cytoplasm</location>
    </subcellularLocation>
</comment>
<comment type="similarity">
    <text evidence="1">Belongs to the imidazoleglycerol-phosphate dehydratase family.</text>
</comment>
<gene>
    <name evidence="1" type="primary">hisB</name>
    <name type="ordered locus">BCQ_1480</name>
</gene>
<reference key="1">
    <citation type="journal article" date="2009" name="J. Bacteriol.">
        <title>Complete genome sequence of the extremophilic Bacillus cereus strain Q1 with industrial applications.</title>
        <authorList>
            <person name="Xiong Z."/>
            <person name="Jiang Y."/>
            <person name="Qi D."/>
            <person name="Lu H."/>
            <person name="Yang F."/>
            <person name="Yang J."/>
            <person name="Chen L."/>
            <person name="Sun L."/>
            <person name="Xu X."/>
            <person name="Xue Y."/>
            <person name="Zhu Y."/>
            <person name="Jin Q."/>
        </authorList>
    </citation>
    <scope>NUCLEOTIDE SEQUENCE [LARGE SCALE GENOMIC DNA]</scope>
    <source>
        <strain>Q1</strain>
    </source>
</reference>
<name>HIS7_BACCQ</name>
<protein>
    <recommendedName>
        <fullName evidence="1">Imidazoleglycerol-phosphate dehydratase</fullName>
        <shortName evidence="1">IGPD</shortName>
        <ecNumber evidence="1">4.2.1.19</ecNumber>
    </recommendedName>
</protein>
<feature type="chain" id="PRO_1000118215" description="Imidazoleglycerol-phosphate dehydratase">
    <location>
        <begin position="1"/>
        <end position="194"/>
    </location>
</feature>
<keyword id="KW-0028">Amino-acid biosynthesis</keyword>
<keyword id="KW-0963">Cytoplasm</keyword>
<keyword id="KW-0368">Histidine biosynthesis</keyword>
<keyword id="KW-0456">Lyase</keyword>
<sequence>MRESSQIRETTETKIKLSLQLDDGKNVSVRTGVGFFDHMLTLFARHGRFGLQVEAEGDVFVDAHHTVEDVGIVLGNCLKEALHSKEGINRYGSAYVPMDESLGFVAIDISGRSYIVFQGELTNPKLGDFDTELTEEFFRAVAHAANITLHARILYGSNTHHKIEALFKAFGRALREAVERNANITGVNSTKGML</sequence>
<accession>B9IUZ7</accession>